<comment type="subcellular location">
    <subcellularLocation>
        <location evidence="2">Membrane</location>
        <topology evidence="2">Multi-pass membrane protein</topology>
    </subcellularLocation>
</comment>
<comment type="similarity">
    <text evidence="2">Belongs to the nematode receptor-like protein srg family.</text>
</comment>
<feature type="chain" id="PRO_0000104566" description="Serpentine receptor class gamma-17">
    <location>
        <begin position="1"/>
        <end position="320"/>
    </location>
</feature>
<feature type="transmembrane region" description="Helical" evidence="1">
    <location>
        <begin position="25"/>
        <end position="45"/>
    </location>
</feature>
<feature type="transmembrane region" description="Helical" evidence="1">
    <location>
        <begin position="80"/>
        <end position="100"/>
    </location>
</feature>
<feature type="transmembrane region" description="Helical" evidence="1">
    <location>
        <begin position="155"/>
        <end position="175"/>
    </location>
</feature>
<feature type="transmembrane region" description="Helical" evidence="1">
    <location>
        <begin position="192"/>
        <end position="212"/>
    </location>
</feature>
<feature type="transmembrane region" description="Helical" evidence="1">
    <location>
        <begin position="237"/>
        <end position="257"/>
    </location>
</feature>
<feature type="transmembrane region" description="Helical" evidence="1">
    <location>
        <begin position="268"/>
        <end position="288"/>
    </location>
</feature>
<sequence>MGTTNLTLDSESICDPNYDILFENAIYFVTACYLSVGLFCHISLLKIILISDRKYFKDNSFFVLFRADLFASTTLLLYDIFFGRIFMYIPQLCPFVSTFFSTPTIFLKVLYVAQNHARFVKSLSQIFMVLNRMSCVLMPATYNQFWNKITPIASFIMLILPFAGLWNIMISQVIASSVRGGFGVDYIKAVKWASLSLFQSICILTALGFTIVCTSVTFYKLACLSDRVRSIERSLCFTSISISCTFLLVAGTQLTFATCASCKTDAMYILQFLAFDTFNVGSAIIMFLTNRHLRSSMFSSQKKRAVTVVTVGQISTNTYN</sequence>
<gene>
    <name type="primary">srg-17</name>
    <name type="ORF">F15A4.7</name>
</gene>
<dbReference type="EMBL" id="Z81062">
    <property type="protein sequence ID" value="CAB02949.2"/>
    <property type="molecule type" value="Genomic_DNA"/>
</dbReference>
<dbReference type="PIR" id="T20955">
    <property type="entry name" value="T20955"/>
</dbReference>
<dbReference type="RefSeq" id="NP_496659.2">
    <property type="nucleotide sequence ID" value="NM_064258.2"/>
</dbReference>
<dbReference type="SMR" id="O17820"/>
<dbReference type="PaxDb" id="6239-F15A4.7"/>
<dbReference type="EnsemblMetazoa" id="F15A4.7.1">
    <property type="protein sequence ID" value="F15A4.7.1"/>
    <property type="gene ID" value="WBGene00005174"/>
</dbReference>
<dbReference type="GeneID" id="184514"/>
<dbReference type="KEGG" id="cel:CELE_F15A4.7"/>
<dbReference type="UCSC" id="F15A4.7">
    <property type="organism name" value="c. elegans"/>
</dbReference>
<dbReference type="AGR" id="WB:WBGene00005174"/>
<dbReference type="CTD" id="184514"/>
<dbReference type="WormBase" id="F15A4.7">
    <property type="protein sequence ID" value="CE33051"/>
    <property type="gene ID" value="WBGene00005174"/>
    <property type="gene designation" value="srg-17"/>
</dbReference>
<dbReference type="eggNOG" id="ENOG502TFWU">
    <property type="taxonomic scope" value="Eukaryota"/>
</dbReference>
<dbReference type="GeneTree" id="ENSGT00970000195841"/>
<dbReference type="HOGENOM" id="CLU_061253_1_0_1"/>
<dbReference type="InParanoid" id="O17820"/>
<dbReference type="OMA" id="FMYIPQL"/>
<dbReference type="OrthoDB" id="5781692at2759"/>
<dbReference type="PhylomeDB" id="O17820"/>
<dbReference type="PRO" id="PR:O17820"/>
<dbReference type="Proteomes" id="UP000001940">
    <property type="component" value="Chromosome II"/>
</dbReference>
<dbReference type="GO" id="GO:0016020">
    <property type="term" value="C:membrane"/>
    <property type="evidence" value="ECO:0007669"/>
    <property type="project" value="UniProtKB-SubCell"/>
</dbReference>
<dbReference type="GO" id="GO:0004888">
    <property type="term" value="F:transmembrane signaling receptor activity"/>
    <property type="evidence" value="ECO:0007669"/>
    <property type="project" value="InterPro"/>
</dbReference>
<dbReference type="GO" id="GO:0007606">
    <property type="term" value="P:sensory perception of chemical stimulus"/>
    <property type="evidence" value="ECO:0007669"/>
    <property type="project" value="InterPro"/>
</dbReference>
<dbReference type="InterPro" id="IPR000609">
    <property type="entry name" value="7TM_GPCR_serpentine_rcpt_Srg"/>
</dbReference>
<dbReference type="InterPro" id="IPR051119">
    <property type="entry name" value="Nematode_SR-like"/>
</dbReference>
<dbReference type="PANTHER" id="PTHR31627:SF12">
    <property type="entry name" value="SERPENTINE RECEPTOR CLASS GAMMA-11-RELATED"/>
    <property type="match status" value="1"/>
</dbReference>
<dbReference type="PANTHER" id="PTHR31627">
    <property type="entry name" value="SERPENTINE RECEPTOR CLASS GAMMA-RELATED"/>
    <property type="match status" value="1"/>
</dbReference>
<dbReference type="Pfam" id="PF02118">
    <property type="entry name" value="Srg"/>
    <property type="match status" value="1"/>
</dbReference>
<dbReference type="PRINTS" id="PR00698">
    <property type="entry name" value="TMPROTEINSRG"/>
</dbReference>
<evidence type="ECO:0000255" key="1"/>
<evidence type="ECO:0000305" key="2"/>
<name>SRG17_CAEEL</name>
<accession>O17820</accession>
<protein>
    <recommendedName>
        <fullName>Serpentine receptor class gamma-17</fullName>
        <shortName>Protein srg-17</shortName>
    </recommendedName>
</protein>
<keyword id="KW-0472">Membrane</keyword>
<keyword id="KW-1185">Reference proteome</keyword>
<keyword id="KW-0812">Transmembrane</keyword>
<keyword id="KW-1133">Transmembrane helix</keyword>
<proteinExistence type="inferred from homology"/>
<organism>
    <name type="scientific">Caenorhabditis elegans</name>
    <dbReference type="NCBI Taxonomy" id="6239"/>
    <lineage>
        <taxon>Eukaryota</taxon>
        <taxon>Metazoa</taxon>
        <taxon>Ecdysozoa</taxon>
        <taxon>Nematoda</taxon>
        <taxon>Chromadorea</taxon>
        <taxon>Rhabditida</taxon>
        <taxon>Rhabditina</taxon>
        <taxon>Rhabditomorpha</taxon>
        <taxon>Rhabditoidea</taxon>
        <taxon>Rhabditidae</taxon>
        <taxon>Peloderinae</taxon>
        <taxon>Caenorhabditis</taxon>
    </lineage>
</organism>
<reference key="1">
    <citation type="journal article" date="1998" name="Science">
        <title>Genome sequence of the nematode C. elegans: a platform for investigating biology.</title>
        <authorList>
            <consortium name="The C. elegans sequencing consortium"/>
        </authorList>
    </citation>
    <scope>NUCLEOTIDE SEQUENCE [LARGE SCALE GENOMIC DNA]</scope>
    <source>
        <strain>Bristol N2</strain>
    </source>
</reference>